<dbReference type="EMBL" id="BA000012">
    <property type="protein sequence ID" value="BAB50739.1"/>
    <property type="molecule type" value="Genomic_DNA"/>
</dbReference>
<dbReference type="RefSeq" id="WP_010912082.1">
    <property type="nucleotide sequence ID" value="NC_002678.2"/>
</dbReference>
<dbReference type="SMR" id="Q98F28"/>
<dbReference type="KEGG" id="mlo:mll3968"/>
<dbReference type="eggNOG" id="COG3750">
    <property type="taxonomic scope" value="Bacteria"/>
</dbReference>
<dbReference type="HOGENOM" id="CLU_158651_3_0_5"/>
<dbReference type="Proteomes" id="UP000000552">
    <property type="component" value="Chromosome"/>
</dbReference>
<dbReference type="GO" id="GO:0003677">
    <property type="term" value="F:DNA binding"/>
    <property type="evidence" value="ECO:0007669"/>
    <property type="project" value="InterPro"/>
</dbReference>
<dbReference type="HAMAP" id="MF_00797">
    <property type="entry name" value="UPF0335"/>
    <property type="match status" value="1"/>
</dbReference>
<dbReference type="InterPro" id="IPR018753">
    <property type="entry name" value="GapR-like"/>
</dbReference>
<dbReference type="InterPro" id="IPR046367">
    <property type="entry name" value="GapR-like_DNA-bd"/>
</dbReference>
<dbReference type="NCBIfam" id="NF010247">
    <property type="entry name" value="PRK13694.1"/>
    <property type="match status" value="1"/>
</dbReference>
<dbReference type="Pfam" id="PF10073">
    <property type="entry name" value="GapR_DNA-bd"/>
    <property type="match status" value="1"/>
</dbReference>
<accession>Q98F28</accession>
<name>Y3968_RHILO</name>
<comment type="similarity">
    <text evidence="1">Belongs to the UPF0335 family.</text>
</comment>
<proteinExistence type="inferred from homology"/>
<sequence>MADDITETSQTVAAGQLRALIERIERLEEEKKTIADDIKEVFAEAKGTGFDTKAIRTIIRLRKKDQAERQEEDAILDLYMAALGMV</sequence>
<gene>
    <name type="ordered locus">mll3968</name>
</gene>
<organism>
    <name type="scientific">Mesorhizobium japonicum (strain LMG 29417 / CECT 9101 / MAFF 303099)</name>
    <name type="common">Mesorhizobium loti (strain MAFF 303099)</name>
    <dbReference type="NCBI Taxonomy" id="266835"/>
    <lineage>
        <taxon>Bacteria</taxon>
        <taxon>Pseudomonadati</taxon>
        <taxon>Pseudomonadota</taxon>
        <taxon>Alphaproteobacteria</taxon>
        <taxon>Hyphomicrobiales</taxon>
        <taxon>Phyllobacteriaceae</taxon>
        <taxon>Mesorhizobium</taxon>
    </lineage>
</organism>
<feature type="chain" id="PRO_0000219928" description="UPF0335 protein mll3968">
    <location>
        <begin position="1"/>
        <end position="86"/>
    </location>
</feature>
<reference key="1">
    <citation type="journal article" date="2000" name="DNA Res.">
        <title>Complete genome structure of the nitrogen-fixing symbiotic bacterium Mesorhizobium loti.</title>
        <authorList>
            <person name="Kaneko T."/>
            <person name="Nakamura Y."/>
            <person name="Sato S."/>
            <person name="Asamizu E."/>
            <person name="Kato T."/>
            <person name="Sasamoto S."/>
            <person name="Watanabe A."/>
            <person name="Idesawa K."/>
            <person name="Ishikawa A."/>
            <person name="Kawashima K."/>
            <person name="Kimura T."/>
            <person name="Kishida Y."/>
            <person name="Kiyokawa C."/>
            <person name="Kohara M."/>
            <person name="Matsumoto M."/>
            <person name="Matsuno A."/>
            <person name="Mochizuki Y."/>
            <person name="Nakayama S."/>
            <person name="Nakazaki N."/>
            <person name="Shimpo S."/>
            <person name="Sugimoto M."/>
            <person name="Takeuchi C."/>
            <person name="Yamada M."/>
            <person name="Tabata S."/>
        </authorList>
    </citation>
    <scope>NUCLEOTIDE SEQUENCE [LARGE SCALE GENOMIC DNA]</scope>
    <source>
        <strain>LMG 29417 / CECT 9101 / MAFF 303099</strain>
    </source>
</reference>
<protein>
    <recommendedName>
        <fullName evidence="1">UPF0335 protein mll3968</fullName>
    </recommendedName>
</protein>
<evidence type="ECO:0000255" key="1">
    <source>
        <dbReference type="HAMAP-Rule" id="MF_00797"/>
    </source>
</evidence>